<reference key="1">
    <citation type="journal article" date="2001" name="Nature">
        <title>Genome sequence of enterohaemorrhagic Escherichia coli O157:H7.</title>
        <authorList>
            <person name="Perna N.T."/>
            <person name="Plunkett G. III"/>
            <person name="Burland V."/>
            <person name="Mau B."/>
            <person name="Glasner J.D."/>
            <person name="Rose D.J."/>
            <person name="Mayhew G.F."/>
            <person name="Evans P.S."/>
            <person name="Gregor J."/>
            <person name="Kirkpatrick H.A."/>
            <person name="Posfai G."/>
            <person name="Hackett J."/>
            <person name="Klink S."/>
            <person name="Boutin A."/>
            <person name="Shao Y."/>
            <person name="Miller L."/>
            <person name="Grotbeck E.J."/>
            <person name="Davis N.W."/>
            <person name="Lim A."/>
            <person name="Dimalanta E.T."/>
            <person name="Potamousis K."/>
            <person name="Apodaca J."/>
            <person name="Anantharaman T.S."/>
            <person name="Lin J."/>
            <person name="Yen G."/>
            <person name="Schwartz D.C."/>
            <person name="Welch R.A."/>
            <person name="Blattner F.R."/>
        </authorList>
    </citation>
    <scope>NUCLEOTIDE SEQUENCE [LARGE SCALE GENOMIC DNA]</scope>
    <source>
        <strain>O157:H7 / EDL933 / ATCC 700927 / EHEC</strain>
    </source>
</reference>
<reference key="2">
    <citation type="journal article" date="2001" name="DNA Res.">
        <title>Complete genome sequence of enterohemorrhagic Escherichia coli O157:H7 and genomic comparison with a laboratory strain K-12.</title>
        <authorList>
            <person name="Hayashi T."/>
            <person name="Makino K."/>
            <person name="Ohnishi M."/>
            <person name="Kurokawa K."/>
            <person name="Ishii K."/>
            <person name="Yokoyama K."/>
            <person name="Han C.-G."/>
            <person name="Ohtsubo E."/>
            <person name="Nakayama K."/>
            <person name="Murata T."/>
            <person name="Tanaka M."/>
            <person name="Tobe T."/>
            <person name="Iida T."/>
            <person name="Takami H."/>
            <person name="Honda T."/>
            <person name="Sasakawa C."/>
            <person name="Ogasawara N."/>
            <person name="Yasunaga T."/>
            <person name="Kuhara S."/>
            <person name="Shiba T."/>
            <person name="Hattori M."/>
            <person name="Shinagawa H."/>
        </authorList>
    </citation>
    <scope>NUCLEOTIDE SEQUENCE [LARGE SCALE GENOMIC DNA]</scope>
    <source>
        <strain>O157:H7 / Sakai / RIMD 0509952 / EHEC</strain>
    </source>
</reference>
<organism>
    <name type="scientific">Escherichia coli O157:H7</name>
    <dbReference type="NCBI Taxonomy" id="83334"/>
    <lineage>
        <taxon>Bacteria</taxon>
        <taxon>Pseudomonadati</taxon>
        <taxon>Pseudomonadota</taxon>
        <taxon>Gammaproteobacteria</taxon>
        <taxon>Enterobacterales</taxon>
        <taxon>Enterobacteriaceae</taxon>
        <taxon>Escherichia</taxon>
    </lineage>
</organism>
<accession>Q8X621</accession>
<gene>
    <name type="primary">ydhQ</name>
    <name type="ordered locus">Z2691</name>
    <name type="ordered locus">ECs2373</name>
</gene>
<keyword id="KW-1185">Reference proteome</keyword>
<proteinExistence type="predicted"/>
<protein>
    <recommendedName>
        <fullName>Uncharacterized protein YdhQ</fullName>
    </recommendedName>
</protein>
<dbReference type="EMBL" id="AE005174">
    <property type="protein sequence ID" value="AAG56653.1"/>
    <property type="molecule type" value="Genomic_DNA"/>
</dbReference>
<dbReference type="EMBL" id="BA000007">
    <property type="protein sequence ID" value="BAB35796.1"/>
    <property type="molecule type" value="Genomic_DNA"/>
</dbReference>
<dbReference type="PIR" id="A85774">
    <property type="entry name" value="A85774"/>
</dbReference>
<dbReference type="PIR" id="E90925">
    <property type="entry name" value="E90925"/>
</dbReference>
<dbReference type="RefSeq" id="NP_310400.1">
    <property type="nucleotide sequence ID" value="NC_002695.1"/>
</dbReference>
<dbReference type="RefSeq" id="WP_000534283.1">
    <property type="nucleotide sequence ID" value="NZ_VOAI01000007.1"/>
</dbReference>
<dbReference type="SMR" id="Q8X621"/>
<dbReference type="GeneID" id="912283"/>
<dbReference type="KEGG" id="ece:Z2691"/>
<dbReference type="KEGG" id="ecs:ECs_2373"/>
<dbReference type="PATRIC" id="fig|386585.9.peg.2485"/>
<dbReference type="eggNOG" id="COG3468">
    <property type="taxonomic scope" value="Bacteria"/>
</dbReference>
<dbReference type="HOGENOM" id="CLU_656797_0_0_6"/>
<dbReference type="Proteomes" id="UP000000558">
    <property type="component" value="Chromosome"/>
</dbReference>
<dbReference type="Proteomes" id="UP000002519">
    <property type="component" value="Chromosome"/>
</dbReference>
<dbReference type="FunFam" id="2.160.20.20:FF:000001">
    <property type="entry name" value="Possible enzyme"/>
    <property type="match status" value="1"/>
</dbReference>
<dbReference type="Gene3D" id="2.160.20.20">
    <property type="match status" value="2"/>
</dbReference>
<dbReference type="InterPro" id="IPR030930">
    <property type="entry name" value="AIDA"/>
</dbReference>
<dbReference type="InterPro" id="IPR012332">
    <property type="entry name" value="Autotransporter_pectin_lyase_C"/>
</dbReference>
<dbReference type="InterPro" id="IPR011050">
    <property type="entry name" value="Pectin_lyase_fold/virulence"/>
</dbReference>
<dbReference type="InterPro" id="IPR004899">
    <property type="entry name" value="Pertactin_central"/>
</dbReference>
<dbReference type="NCBIfam" id="TIGR04415">
    <property type="entry name" value="O_hepto_targRPT"/>
    <property type="match status" value="1"/>
</dbReference>
<dbReference type="NCBIfam" id="NF007409">
    <property type="entry name" value="PRK09945.1"/>
    <property type="match status" value="1"/>
</dbReference>
<dbReference type="Pfam" id="PF16168">
    <property type="entry name" value="AIDA"/>
    <property type="match status" value="1"/>
</dbReference>
<dbReference type="Pfam" id="PF03212">
    <property type="entry name" value="Pertactin"/>
    <property type="match status" value="1"/>
</dbReference>
<dbReference type="SUPFAM" id="SSF51126">
    <property type="entry name" value="Pectin lyase-like"/>
    <property type="match status" value="1"/>
</dbReference>
<feature type="chain" id="PRO_0000201325" description="Uncharacterized protein YdhQ">
    <location>
        <begin position="1"/>
        <end position="418"/>
    </location>
</feature>
<name>YDHQ_ECO57</name>
<sequence>MGSDAKNLMSDGNVQIVKTGEVIGATQLTEGELIVEAGGRAENTVVTGAGWLKVATGGIAKCTQYGNNGTLSVSDGAIATDIVQSEGGAISLSTLATVNGRHPEGEFSVDQGYACGLLLENGGNLRVLEGHRAEKIILDQEGGLLVNGTTSAVVVDEGGELLVYPGGEASNCEINQGGVFMLAGKANDTLLADGTMNNLGGEDSDTIVENGAIYRLGTDGLQLYSSGKTQNLSVNVGGRAEVHAGTLENAVIQGGTVILLSPTSADENFVVEEDRAPVELTGSVALLDGASMIIGYGADLQQSTITVQQGGVLILDGSTVKGDSVTFSIGNINLNGGKLWLITGAATHVQLKVKRLRGEGAICLQTSAKEISPDFINVKGEVNGDIRVQITDASRQTLCNALKLQPDEDGIGATLQPA</sequence>